<sequence>MEFPGSSDNYLTITGPGHPFLTGTETFHTPSLGDEEFEIPPISLDSDPSLAVSDVVGHFDDLADSSGVQDEGFAAQYGVQTLDMPVEMAHEVMDQTGGLLGAGLAMDLDHPIVTPYSANPPVTIDVSMTDMSSGILGHGQLTTIDQSELSSQLGLSLGGGTILHPVQSPDDHLSPTPSPTSSLHDEDMEDFRRITAPKSIIVEQTKKPKTPKKKKKKDPNEPQKPLSAYALFFRDTQAAIKGQNPNATFGEVSKIVASMWDSLGEEQKQVYKRKTEAAKKEYLKALALYKANQLSQVAVDTVDLDPPAVPALLSESPVPSPTVVTATSIPECVSSPSVSSSPSQTVAAPQQSIAKIIISKQILPAGQGSTAIAMSQGMVTVIPATVVTSRGLPLAQLQPSPQAQRITRSVLQAAMQMPPRLQPPPLQQMQQPPRLLQMAPAQQPSITILQAPPPLQPMQKVRLSLQPPPLQIKIIPPPLQPQPQVVQVQNQSLSVINVPASPEAPASPPEQLEVLPEVVQEESPPPQMDVELVSSSPPPSLSPQCVRSGCENPPVECKDWDNEYCSNECVVKHCRDTFMSWIATRSQGTLAPVK</sequence>
<accession>Q6IRR0</accession>
<keyword id="KW-0158">Chromosome</keyword>
<keyword id="KW-0238">DNA-binding</keyword>
<keyword id="KW-0539">Nucleus</keyword>
<keyword id="KW-0597">Phosphoprotein</keyword>
<keyword id="KW-1185">Reference proteome</keyword>
<proteinExistence type="evidence at transcript level"/>
<comment type="function">
    <text evidence="1 2">Transcription factor that modulates cell fate reprogramming from the somatic state to the pluripotent and neuronal fate. Also acts as a regulatory component of protein phosphatase 1 (PP1) complexes. Component of the PNUTS-PP1 protein phosphatase complex, a PP1 complex that regulates RNA polymerase II transcription pause-release (By similarity). PNUTS-PP1 also plays a role in the control of chromatin structure and cell cycle progression during the transition from mitosis into interphase (By similarity).</text>
</comment>
<comment type="subunit">
    <text evidence="2">Component of the PNUTS-PP1 phosphatase complex.</text>
</comment>
<comment type="subcellular location">
    <subcellularLocation>
        <location evidence="2">Nucleus</location>
    </subcellularLocation>
    <subcellularLocation>
        <location evidence="2">Chromosome</location>
    </subcellularLocation>
    <text evidence="2">Associated with chromatin; colocalizes with RNA polymerase II (Pol II) on chromatin.</text>
</comment>
<evidence type="ECO:0000250" key="1">
    <source>
        <dbReference type="UniProtKB" id="O94842"/>
    </source>
</evidence>
<evidence type="ECO:0000250" key="2">
    <source>
        <dbReference type="UniProtKB" id="Q8BU11"/>
    </source>
</evidence>
<evidence type="ECO:0000255" key="3"/>
<evidence type="ECO:0000255" key="4">
    <source>
        <dbReference type="PROSITE-ProRule" id="PRU00267"/>
    </source>
</evidence>
<evidence type="ECO:0000256" key="5">
    <source>
        <dbReference type="SAM" id="MobiDB-lite"/>
    </source>
</evidence>
<dbReference type="EMBL" id="BC070618">
    <property type="protein sequence ID" value="AAH70618.1"/>
    <property type="molecule type" value="mRNA"/>
</dbReference>
<dbReference type="RefSeq" id="NP_001084977.1">
    <property type="nucleotide sequence ID" value="NM_001091508.1"/>
</dbReference>
<dbReference type="SMR" id="Q6IRR0"/>
<dbReference type="DNASU" id="432037"/>
<dbReference type="GeneID" id="432037"/>
<dbReference type="KEGG" id="xla:432037"/>
<dbReference type="AGR" id="Xenbase:XB-GENE-6256289"/>
<dbReference type="CTD" id="432037"/>
<dbReference type="Xenbase" id="XB-GENE-6256289">
    <property type="gene designation" value="tox4.L"/>
</dbReference>
<dbReference type="OMA" id="MEQCLIM"/>
<dbReference type="OrthoDB" id="10027956at2759"/>
<dbReference type="Proteomes" id="UP000186698">
    <property type="component" value="Chromosome 1L"/>
</dbReference>
<dbReference type="Bgee" id="432037">
    <property type="expression patterns" value="Expressed in gastrula and 19 other cell types or tissues"/>
</dbReference>
<dbReference type="GO" id="GO:0005634">
    <property type="term" value="C:nucleus"/>
    <property type="evidence" value="ECO:0000318"/>
    <property type="project" value="GO_Central"/>
</dbReference>
<dbReference type="GO" id="GO:0072357">
    <property type="term" value="C:PTW/PP1 phosphatase complex"/>
    <property type="evidence" value="ECO:0000250"/>
    <property type="project" value="UniProtKB"/>
</dbReference>
<dbReference type="GO" id="GO:0031490">
    <property type="term" value="F:chromatin DNA binding"/>
    <property type="evidence" value="ECO:0000318"/>
    <property type="project" value="GO_Central"/>
</dbReference>
<dbReference type="GO" id="GO:0032968">
    <property type="term" value="P:positive regulation of transcription elongation by RNA polymerase II"/>
    <property type="evidence" value="ECO:0000250"/>
    <property type="project" value="UniProtKB"/>
</dbReference>
<dbReference type="GO" id="GO:0006357">
    <property type="term" value="P:regulation of transcription by RNA polymerase II"/>
    <property type="evidence" value="ECO:0000318"/>
    <property type="project" value="GO_Central"/>
</dbReference>
<dbReference type="GO" id="GO:0001111">
    <property type="term" value="P:RNA polymerase II promoter clearance"/>
    <property type="evidence" value="ECO:0000250"/>
    <property type="project" value="UniProtKB"/>
</dbReference>
<dbReference type="CDD" id="cd21995">
    <property type="entry name" value="HMG-box_TOX-like"/>
    <property type="match status" value="1"/>
</dbReference>
<dbReference type="FunFam" id="1.10.30.10:FF:000005">
    <property type="entry name" value="TOX high mobility group box family member 3"/>
    <property type="match status" value="1"/>
</dbReference>
<dbReference type="Gene3D" id="1.10.30.10">
    <property type="entry name" value="High mobility group box domain"/>
    <property type="match status" value="1"/>
</dbReference>
<dbReference type="InterPro" id="IPR009071">
    <property type="entry name" value="HMG_box_dom"/>
</dbReference>
<dbReference type="InterPro" id="IPR036910">
    <property type="entry name" value="HMG_box_dom_sf"/>
</dbReference>
<dbReference type="InterPro" id="IPR051365">
    <property type="entry name" value="TOX_HMG-box_domain"/>
</dbReference>
<dbReference type="PANTHER" id="PTHR45781">
    <property type="entry name" value="AGAP000281-PA"/>
    <property type="match status" value="1"/>
</dbReference>
<dbReference type="PANTHER" id="PTHR45781:SF2">
    <property type="entry name" value="TOX HIGH MOBILITY GROUP BOX FAMILY MEMBER 4"/>
    <property type="match status" value="1"/>
</dbReference>
<dbReference type="Pfam" id="PF00505">
    <property type="entry name" value="HMG_box"/>
    <property type="match status" value="1"/>
</dbReference>
<dbReference type="SMART" id="SM00398">
    <property type="entry name" value="HMG"/>
    <property type="match status" value="1"/>
</dbReference>
<dbReference type="SUPFAM" id="SSF47095">
    <property type="entry name" value="HMG-box"/>
    <property type="match status" value="1"/>
</dbReference>
<dbReference type="PROSITE" id="PS50118">
    <property type="entry name" value="HMG_BOX_2"/>
    <property type="match status" value="1"/>
</dbReference>
<protein>
    <recommendedName>
        <fullName>TOX high mobility group box family member 4-B</fullName>
    </recommendedName>
</protein>
<name>TOX4B_XENLA</name>
<feature type="chain" id="PRO_0000364351" description="TOX high mobility group box family member 4-B">
    <location>
        <begin position="1"/>
        <end position="594"/>
    </location>
</feature>
<feature type="DNA-binding region" description="HMG box" evidence="4">
    <location>
        <begin position="222"/>
        <end position="290"/>
    </location>
</feature>
<feature type="region of interest" description="Disordered" evidence="5">
    <location>
        <begin position="160"/>
        <end position="225"/>
    </location>
</feature>
<feature type="region of interest" description="Disordered" evidence="5">
    <location>
        <begin position="522"/>
        <end position="545"/>
    </location>
</feature>
<feature type="short sequence motif" description="Nuclear localization signal" evidence="3">
    <location>
        <begin position="212"/>
        <end position="217"/>
    </location>
</feature>
<feature type="compositionally biased region" description="Basic residues" evidence="5">
    <location>
        <begin position="207"/>
        <end position="217"/>
    </location>
</feature>
<organism>
    <name type="scientific">Xenopus laevis</name>
    <name type="common">African clawed frog</name>
    <dbReference type="NCBI Taxonomy" id="8355"/>
    <lineage>
        <taxon>Eukaryota</taxon>
        <taxon>Metazoa</taxon>
        <taxon>Chordata</taxon>
        <taxon>Craniata</taxon>
        <taxon>Vertebrata</taxon>
        <taxon>Euteleostomi</taxon>
        <taxon>Amphibia</taxon>
        <taxon>Batrachia</taxon>
        <taxon>Anura</taxon>
        <taxon>Pipoidea</taxon>
        <taxon>Pipidae</taxon>
        <taxon>Xenopodinae</taxon>
        <taxon>Xenopus</taxon>
        <taxon>Xenopus</taxon>
    </lineage>
</organism>
<gene>
    <name type="primary">tox4-b</name>
</gene>
<reference key="1">
    <citation type="submission" date="2004-05" db="EMBL/GenBank/DDBJ databases">
        <authorList>
            <consortium name="NIH - Xenopus Gene Collection (XGC) project"/>
        </authorList>
    </citation>
    <scope>NUCLEOTIDE SEQUENCE [LARGE SCALE MRNA]</scope>
    <source>
        <tissue>Embryo</tissue>
    </source>
</reference>